<gene>
    <name evidence="1" type="primary">hutI</name>
    <name type="ordered locus">Sbal223_0099</name>
</gene>
<reference key="1">
    <citation type="submission" date="2008-12" db="EMBL/GenBank/DDBJ databases">
        <title>Complete sequence of chromosome of Shewanella baltica OS223.</title>
        <authorList>
            <consortium name="US DOE Joint Genome Institute"/>
            <person name="Lucas S."/>
            <person name="Copeland A."/>
            <person name="Lapidus A."/>
            <person name="Glavina del Rio T."/>
            <person name="Dalin E."/>
            <person name="Tice H."/>
            <person name="Bruce D."/>
            <person name="Goodwin L."/>
            <person name="Pitluck S."/>
            <person name="Chertkov O."/>
            <person name="Meincke L."/>
            <person name="Brettin T."/>
            <person name="Detter J.C."/>
            <person name="Han C."/>
            <person name="Kuske C.R."/>
            <person name="Larimer F."/>
            <person name="Land M."/>
            <person name="Hauser L."/>
            <person name="Kyrpides N."/>
            <person name="Ovchinnikova G."/>
            <person name="Brettar I."/>
            <person name="Rodrigues J."/>
            <person name="Konstantinidis K."/>
            <person name="Tiedje J."/>
        </authorList>
    </citation>
    <scope>NUCLEOTIDE SEQUENCE [LARGE SCALE GENOMIC DNA]</scope>
    <source>
        <strain>OS223</strain>
    </source>
</reference>
<feature type="chain" id="PRO_1000133887" description="Imidazolonepropionase">
    <location>
        <begin position="1"/>
        <end position="410"/>
    </location>
</feature>
<feature type="binding site" evidence="1">
    <location>
        <position position="73"/>
    </location>
    <ligand>
        <name>Fe(3+)</name>
        <dbReference type="ChEBI" id="CHEBI:29034"/>
    </ligand>
</feature>
<feature type="binding site" evidence="1">
    <location>
        <position position="73"/>
    </location>
    <ligand>
        <name>Zn(2+)</name>
        <dbReference type="ChEBI" id="CHEBI:29105"/>
    </ligand>
</feature>
<feature type="binding site" evidence="1">
    <location>
        <position position="75"/>
    </location>
    <ligand>
        <name>Fe(3+)</name>
        <dbReference type="ChEBI" id="CHEBI:29034"/>
    </ligand>
</feature>
<feature type="binding site" evidence="1">
    <location>
        <position position="75"/>
    </location>
    <ligand>
        <name>Zn(2+)</name>
        <dbReference type="ChEBI" id="CHEBI:29105"/>
    </ligand>
</feature>
<feature type="binding site" evidence="1">
    <location>
        <position position="82"/>
    </location>
    <ligand>
        <name>4-imidazolone-5-propanoate</name>
        <dbReference type="ChEBI" id="CHEBI:77893"/>
    </ligand>
</feature>
<feature type="binding site" evidence="1">
    <location>
        <position position="145"/>
    </location>
    <ligand>
        <name>4-imidazolone-5-propanoate</name>
        <dbReference type="ChEBI" id="CHEBI:77893"/>
    </ligand>
</feature>
<feature type="binding site" evidence="1">
    <location>
        <position position="145"/>
    </location>
    <ligand>
        <name>N-formimidoyl-L-glutamate</name>
        <dbReference type="ChEBI" id="CHEBI:58928"/>
    </ligand>
</feature>
<feature type="binding site" evidence="1">
    <location>
        <position position="178"/>
    </location>
    <ligand>
        <name>4-imidazolone-5-propanoate</name>
        <dbReference type="ChEBI" id="CHEBI:77893"/>
    </ligand>
</feature>
<feature type="binding site" evidence="1">
    <location>
        <position position="243"/>
    </location>
    <ligand>
        <name>Fe(3+)</name>
        <dbReference type="ChEBI" id="CHEBI:29034"/>
    </ligand>
</feature>
<feature type="binding site" evidence="1">
    <location>
        <position position="243"/>
    </location>
    <ligand>
        <name>Zn(2+)</name>
        <dbReference type="ChEBI" id="CHEBI:29105"/>
    </ligand>
</feature>
<feature type="binding site" evidence="1">
    <location>
        <position position="246"/>
    </location>
    <ligand>
        <name>4-imidazolone-5-propanoate</name>
        <dbReference type="ChEBI" id="CHEBI:77893"/>
    </ligand>
</feature>
<feature type="binding site" evidence="1">
    <location>
        <position position="318"/>
    </location>
    <ligand>
        <name>Fe(3+)</name>
        <dbReference type="ChEBI" id="CHEBI:29034"/>
    </ligand>
</feature>
<feature type="binding site" evidence="1">
    <location>
        <position position="318"/>
    </location>
    <ligand>
        <name>Zn(2+)</name>
        <dbReference type="ChEBI" id="CHEBI:29105"/>
    </ligand>
</feature>
<feature type="binding site" evidence="1">
    <location>
        <position position="320"/>
    </location>
    <ligand>
        <name>N-formimidoyl-L-glutamate</name>
        <dbReference type="ChEBI" id="CHEBI:58928"/>
    </ligand>
</feature>
<feature type="binding site" evidence="1">
    <location>
        <position position="322"/>
    </location>
    <ligand>
        <name>N-formimidoyl-L-glutamate</name>
        <dbReference type="ChEBI" id="CHEBI:58928"/>
    </ligand>
</feature>
<feature type="binding site" evidence="1">
    <location>
        <position position="323"/>
    </location>
    <ligand>
        <name>4-imidazolone-5-propanoate</name>
        <dbReference type="ChEBI" id="CHEBI:77893"/>
    </ligand>
</feature>
<accession>B8E3L5</accession>
<comment type="function">
    <text evidence="1">Catalyzes the hydrolytic cleavage of the carbon-nitrogen bond in imidazolone-5-propanoate to yield N-formimidoyl-L-glutamate. It is the third step in the universal histidine degradation pathway.</text>
</comment>
<comment type="catalytic activity">
    <reaction evidence="1">
        <text>4-imidazolone-5-propanoate + H2O = N-formimidoyl-L-glutamate</text>
        <dbReference type="Rhea" id="RHEA:23660"/>
        <dbReference type="ChEBI" id="CHEBI:15377"/>
        <dbReference type="ChEBI" id="CHEBI:58928"/>
        <dbReference type="ChEBI" id="CHEBI:77893"/>
        <dbReference type="EC" id="3.5.2.7"/>
    </reaction>
</comment>
<comment type="cofactor">
    <cofactor evidence="1">
        <name>Zn(2+)</name>
        <dbReference type="ChEBI" id="CHEBI:29105"/>
    </cofactor>
    <cofactor evidence="1">
        <name>Fe(3+)</name>
        <dbReference type="ChEBI" id="CHEBI:29034"/>
    </cofactor>
    <text evidence="1">Binds 1 zinc or iron ion per subunit.</text>
</comment>
<comment type="pathway">
    <text evidence="1">Amino-acid degradation; L-histidine degradation into L-glutamate; N-formimidoyl-L-glutamate from L-histidine: step 3/3.</text>
</comment>
<comment type="subcellular location">
    <subcellularLocation>
        <location evidence="1">Cytoplasm</location>
    </subcellularLocation>
</comment>
<comment type="similarity">
    <text evidence="1">Belongs to the metallo-dependent hydrolases superfamily. HutI family.</text>
</comment>
<protein>
    <recommendedName>
        <fullName evidence="1">Imidazolonepropionase</fullName>
        <ecNumber evidence="1">3.5.2.7</ecNumber>
    </recommendedName>
    <alternativeName>
        <fullName evidence="1">Imidazolone-5-propionate hydrolase</fullName>
    </alternativeName>
</protein>
<evidence type="ECO:0000255" key="1">
    <source>
        <dbReference type="HAMAP-Rule" id="MF_00372"/>
    </source>
</evidence>
<proteinExistence type="inferred from homology"/>
<organism>
    <name type="scientific">Shewanella baltica (strain OS223)</name>
    <dbReference type="NCBI Taxonomy" id="407976"/>
    <lineage>
        <taxon>Bacteria</taxon>
        <taxon>Pseudomonadati</taxon>
        <taxon>Pseudomonadota</taxon>
        <taxon>Gammaproteobacteria</taxon>
        <taxon>Alteromonadales</taxon>
        <taxon>Shewanellaceae</taxon>
        <taxon>Shewanella</taxon>
    </lineage>
</organism>
<name>HUTI_SHEB2</name>
<dbReference type="EC" id="3.5.2.7" evidence="1"/>
<dbReference type="EMBL" id="CP001252">
    <property type="protein sequence ID" value="ACK44641.1"/>
    <property type="molecule type" value="Genomic_DNA"/>
</dbReference>
<dbReference type="RefSeq" id="WP_012586396.1">
    <property type="nucleotide sequence ID" value="NC_011663.1"/>
</dbReference>
<dbReference type="SMR" id="B8E3L5"/>
<dbReference type="KEGG" id="sbp:Sbal223_0099"/>
<dbReference type="HOGENOM" id="CLU_041647_0_0_6"/>
<dbReference type="UniPathway" id="UPA00379">
    <property type="reaction ID" value="UER00551"/>
</dbReference>
<dbReference type="Proteomes" id="UP000002507">
    <property type="component" value="Chromosome"/>
</dbReference>
<dbReference type="GO" id="GO:0005737">
    <property type="term" value="C:cytoplasm"/>
    <property type="evidence" value="ECO:0007669"/>
    <property type="project" value="UniProtKB-SubCell"/>
</dbReference>
<dbReference type="GO" id="GO:0050480">
    <property type="term" value="F:imidazolonepropionase activity"/>
    <property type="evidence" value="ECO:0007669"/>
    <property type="project" value="UniProtKB-UniRule"/>
</dbReference>
<dbReference type="GO" id="GO:0005506">
    <property type="term" value="F:iron ion binding"/>
    <property type="evidence" value="ECO:0007669"/>
    <property type="project" value="UniProtKB-UniRule"/>
</dbReference>
<dbReference type="GO" id="GO:0008270">
    <property type="term" value="F:zinc ion binding"/>
    <property type="evidence" value="ECO:0007669"/>
    <property type="project" value="UniProtKB-UniRule"/>
</dbReference>
<dbReference type="GO" id="GO:0019556">
    <property type="term" value="P:L-histidine catabolic process to glutamate and formamide"/>
    <property type="evidence" value="ECO:0007669"/>
    <property type="project" value="UniProtKB-UniPathway"/>
</dbReference>
<dbReference type="GO" id="GO:0019557">
    <property type="term" value="P:L-histidine catabolic process to glutamate and formate"/>
    <property type="evidence" value="ECO:0007669"/>
    <property type="project" value="UniProtKB-UniPathway"/>
</dbReference>
<dbReference type="CDD" id="cd01296">
    <property type="entry name" value="Imidazolone-5PH"/>
    <property type="match status" value="1"/>
</dbReference>
<dbReference type="FunFam" id="3.20.20.140:FF:000007">
    <property type="entry name" value="Imidazolonepropionase"/>
    <property type="match status" value="1"/>
</dbReference>
<dbReference type="Gene3D" id="3.20.20.140">
    <property type="entry name" value="Metal-dependent hydrolases"/>
    <property type="match status" value="1"/>
</dbReference>
<dbReference type="Gene3D" id="2.30.40.10">
    <property type="entry name" value="Urease, subunit C, domain 1"/>
    <property type="match status" value="1"/>
</dbReference>
<dbReference type="HAMAP" id="MF_00372">
    <property type="entry name" value="HutI"/>
    <property type="match status" value="1"/>
</dbReference>
<dbReference type="InterPro" id="IPR006680">
    <property type="entry name" value="Amidohydro-rel"/>
</dbReference>
<dbReference type="InterPro" id="IPR005920">
    <property type="entry name" value="HutI"/>
</dbReference>
<dbReference type="InterPro" id="IPR011059">
    <property type="entry name" value="Metal-dep_hydrolase_composite"/>
</dbReference>
<dbReference type="InterPro" id="IPR032466">
    <property type="entry name" value="Metal_Hydrolase"/>
</dbReference>
<dbReference type="NCBIfam" id="TIGR01224">
    <property type="entry name" value="hutI"/>
    <property type="match status" value="1"/>
</dbReference>
<dbReference type="PANTHER" id="PTHR42752">
    <property type="entry name" value="IMIDAZOLONEPROPIONASE"/>
    <property type="match status" value="1"/>
</dbReference>
<dbReference type="PANTHER" id="PTHR42752:SF1">
    <property type="entry name" value="IMIDAZOLONEPROPIONASE-RELATED"/>
    <property type="match status" value="1"/>
</dbReference>
<dbReference type="Pfam" id="PF01979">
    <property type="entry name" value="Amidohydro_1"/>
    <property type="match status" value="1"/>
</dbReference>
<dbReference type="SUPFAM" id="SSF51338">
    <property type="entry name" value="Composite domain of metallo-dependent hydrolases"/>
    <property type="match status" value="1"/>
</dbReference>
<dbReference type="SUPFAM" id="SSF51556">
    <property type="entry name" value="Metallo-dependent hydrolases"/>
    <property type="match status" value="1"/>
</dbReference>
<keyword id="KW-0963">Cytoplasm</keyword>
<keyword id="KW-0369">Histidine metabolism</keyword>
<keyword id="KW-0378">Hydrolase</keyword>
<keyword id="KW-0408">Iron</keyword>
<keyword id="KW-0479">Metal-binding</keyword>
<keyword id="KW-0862">Zinc</keyword>
<sequence length="410" mass="44198">MSWDQVWIDVNLATMDPSISAPYGAITNAAIAVKDGKIAWLGPRSELPAFDVLSIPVYRGKGGWITPGLIDAHTHLIFAGNRANEFELRLQGASYEEIARSGGGIISTVKACREADEAELFELGRQRLNALAKEGVTTVEIKSGYGLDTETELKILRVARELGKHHHVDVKTTFLGAHAIPPEYKDNSDGYVDLIINKMLPAVIAENLADAVDVFCENIAFNLEQTERVLSAAKAAGLEIKLHAEQLTNMGGSALAARLGAKSVDHIEYLDEAGVKALSESGTCAVLLPGAFYFLRETQKPPIDLLRQYGVPMVLASDFNPGSSPICSTLLMLNMGCTLFRLTPEEALKGLTLNAAKALGIEDNVGSLVVGKQADFCLWDIATPAQLAYSYGVNPCKDVVKNGKLVHQHT</sequence>